<name>VIF_HV2UC</name>
<protein>
    <recommendedName>
        <fullName>Virion infectivity factor</fullName>
        <shortName>Vif</shortName>
    </recommendedName>
    <alternativeName>
        <fullName>Q protein</fullName>
    </alternativeName>
    <alternativeName>
        <fullName>SOR protein</fullName>
    </alternativeName>
</protein>
<feature type="chain" id="PRO_0000245155" description="Virion infectivity factor" evidence="1">
    <location>
        <begin position="1"/>
        <end position="216"/>
    </location>
</feature>
<feature type="region of interest" description="Multimerization" evidence="1">
    <location>
        <begin position="154"/>
        <end position="168"/>
    </location>
</feature>
<feature type="region of interest" description="Disordered" evidence="2">
    <location>
        <begin position="161"/>
        <end position="180"/>
    </location>
</feature>
<feature type="short sequence motif" description="HCCH motif" evidence="1">
    <location>
        <begin position="110"/>
        <end position="141"/>
    </location>
</feature>
<feature type="short sequence motif" description="BC-box-like motif" evidence="1">
    <location>
        <begin position="147"/>
        <end position="156"/>
    </location>
</feature>
<feature type="compositionally biased region" description="Basic residues" evidence="2">
    <location>
        <begin position="170"/>
        <end position="180"/>
    </location>
</feature>
<feature type="modified residue" description="Phosphothreonine; by host MAP4K1" evidence="1">
    <location>
        <position position="98"/>
    </location>
</feature>
<feature type="modified residue" description="Phosphoserine; by host" evidence="1">
    <location>
        <position position="147"/>
    </location>
</feature>
<comment type="function">
    <text evidence="1">Counteracts the innate antiviral activity of APOBEC3G. Forms a complex with host APOBEC3G thus preventing the entry of this lethally hypermutating enzyme into progeny virions. Functions as an adapter molecule, recruiting APOBEC3G to the ubiquitin-proteasome machinery. Targets APOBEC3G for degradation through the assembly with elongin BC complex, CUL5 and RBX1. Binds viral RNA and affects the stability of viral nucleoprotein core. May play a role in viral morphology (By similarity).</text>
</comment>
<comment type="subunit">
    <text evidence="1">Homomultimer; in vitro and presumably in vivo. Interacts with viral Pr55Gag precursor and human APOBEC3G. The interaction between Vif and APOBEC3G is species-specific, which may play a role in restricting the replication of HIV to humans. Forms an E3 ligase complex by interacting with human CUL5 and elongin BC complex (ELOB and ELOC) (By similarity).</text>
</comment>
<comment type="subcellular location">
    <subcellularLocation>
        <location evidence="1">Host cytoplasm</location>
    </subcellularLocation>
    <subcellularLocation>
        <location evidence="1">Host cell membrane</location>
        <topology evidence="1">Peripheral membrane protein</topology>
        <orientation evidence="1">Cytoplasmic side</orientation>
    </subcellularLocation>
    <subcellularLocation>
        <location evidence="1">Virion</location>
    </subcellularLocation>
    <text evidence="1">In the cytoplasm, seems to colocalize with intermediate filament vimentin. A fraction is associated with the cytoplasmic side of cellular membranes, presumably via the interaction with Pr55Gag precursor (By similarity).</text>
</comment>
<comment type="induction">
    <text>Expressed late during infection in a Rev-dependent manner.</text>
</comment>
<comment type="domain">
    <text evidence="1">The BC-like-box motif mediates the interaction with elongin BC complex.</text>
</comment>
<comment type="domain">
    <text evidence="1">The HCCH motif (H-x(5)-C-x(18)-C-x(5)-H) mediates the interaction with CUL5.</text>
</comment>
<comment type="PTM">
    <text evidence="1">Highly phosphorylated on serine and threonine residues.</text>
</comment>
<comment type="PTM">
    <text evidence="1">Polyubiquitinated and degraded by the proteasome in the presence of APOBEC3G.</text>
</comment>
<comment type="miscellaneous">
    <text>Required for replication in 'nonpermissive' cells, including primary T-cells, macrophages and certain T-cell lines, but is dispensable for replication in 'permissive' cell lines, such as 293T cells. In nonpermissive cells, Vif-defective viruses can produce virions, but they fail to complete reverse transcription and cannot successfully infect new cells.</text>
</comment>
<comment type="miscellaneous">
    <text>Vif-defective viruses show catastrophic failure in reverse transcription due to APOBEC-induced mutations that initiate a DNA base repair pathway and compromise the structural integrity of the ssDNA. In the absence of Vif, the virion is morphologically abnormal.</text>
</comment>
<comment type="similarity">
    <text evidence="3">Belongs to the primate lentivirus group Vif protein family.</text>
</comment>
<proteinExistence type="evidence at transcript level"/>
<reference key="1">
    <citation type="journal article" date="1993" name="J. Virol.">
        <title>Distinguishing features of an infectious molecular clone of the highly divergent and noncytopathic human immunodeficiency virus type 2 UC1 strain.</title>
        <authorList>
            <person name="Barnett S.W."/>
            <person name="Quiroga M."/>
            <person name="Werner A."/>
            <person name="Dina D."/>
            <person name="Levy J.A."/>
        </authorList>
    </citation>
    <scope>NUCLEOTIDE SEQUENCE [GENOMIC RNA]</scope>
</reference>
<organism>
    <name type="scientific">Human immunodeficiency virus type 2 subtype B (isolate UC1)</name>
    <name type="common">HIV-2</name>
    <dbReference type="NCBI Taxonomy" id="388822"/>
    <lineage>
        <taxon>Viruses</taxon>
        <taxon>Riboviria</taxon>
        <taxon>Pararnavirae</taxon>
        <taxon>Artverviricota</taxon>
        <taxon>Revtraviricetes</taxon>
        <taxon>Ortervirales</taxon>
        <taxon>Retroviridae</taxon>
        <taxon>Orthoretrovirinae</taxon>
        <taxon>Lentivirus</taxon>
        <taxon>Human immunodeficiency virus 2</taxon>
    </lineage>
</organism>
<organismHost>
    <name type="scientific">Homo sapiens</name>
    <name type="common">Human</name>
    <dbReference type="NCBI Taxonomy" id="9606"/>
</organismHost>
<dbReference type="EMBL" id="L07625">
    <property type="protein sequence ID" value="AAA43943.1"/>
    <property type="molecule type" value="Genomic_RNA"/>
</dbReference>
<dbReference type="SMR" id="Q76635"/>
<dbReference type="Proteomes" id="UP000007428">
    <property type="component" value="Segment"/>
</dbReference>
<dbReference type="GO" id="GO:0030430">
    <property type="term" value="C:host cell cytoplasm"/>
    <property type="evidence" value="ECO:0007669"/>
    <property type="project" value="UniProtKB-SubCell"/>
</dbReference>
<dbReference type="GO" id="GO:0020002">
    <property type="term" value="C:host cell plasma membrane"/>
    <property type="evidence" value="ECO:0007669"/>
    <property type="project" value="UniProtKB-SubCell"/>
</dbReference>
<dbReference type="GO" id="GO:0016020">
    <property type="term" value="C:membrane"/>
    <property type="evidence" value="ECO:0007669"/>
    <property type="project" value="UniProtKB-KW"/>
</dbReference>
<dbReference type="GO" id="GO:0044423">
    <property type="term" value="C:virion component"/>
    <property type="evidence" value="ECO:0007669"/>
    <property type="project" value="UniProtKB-KW"/>
</dbReference>
<dbReference type="GO" id="GO:0019058">
    <property type="term" value="P:viral life cycle"/>
    <property type="evidence" value="ECO:0007669"/>
    <property type="project" value="InterPro"/>
</dbReference>
<dbReference type="InterPro" id="IPR000475">
    <property type="entry name" value="Vif"/>
</dbReference>
<dbReference type="Pfam" id="PF00559">
    <property type="entry name" value="Vif"/>
    <property type="match status" value="1"/>
</dbReference>
<dbReference type="PRINTS" id="PR00349">
    <property type="entry name" value="VIRIONINFFCT"/>
</dbReference>
<gene>
    <name type="primary">vif</name>
</gene>
<evidence type="ECO:0000250" key="1"/>
<evidence type="ECO:0000256" key="2">
    <source>
        <dbReference type="SAM" id="MobiDB-lite"/>
    </source>
</evidence>
<evidence type="ECO:0000305" key="3"/>
<keyword id="KW-0014">AIDS</keyword>
<keyword id="KW-1032">Host cell membrane</keyword>
<keyword id="KW-1035">Host cytoplasm</keyword>
<keyword id="KW-1043">Host membrane</keyword>
<keyword id="KW-0945">Host-virus interaction</keyword>
<keyword id="KW-0472">Membrane</keyword>
<keyword id="KW-0597">Phosphoprotein</keyword>
<keyword id="KW-0832">Ubl conjugation</keyword>
<keyword id="KW-0833">Ubl conjugation pathway</keyword>
<keyword id="KW-0946">Virion</keyword>
<accession>Q76635</accession>
<sequence>MEGEKNWIVVPTWRIPGRLEKWHSLVKYLKHRTKELQQVSYVPHHKVGWAWWTCSRVIFPLKEEAYLEVQGYWNLTPERGFLSSYAVRLTWYKRSFYTDVTPDVADQLLHGSYFSCFTANEVRRAIRGEKILSYCNYPSAHEGQVPSLQFLALRVIQEGKDGSQGESATRKQRRRNNRRSIRLARKNNNRAQQGSSQPLAPRTHFPGLAEVLGILA</sequence>